<feature type="signal peptide" evidence="1">
    <location>
        <begin position="1"/>
        <end position="28"/>
    </location>
</feature>
<feature type="chain" id="PRO_0000213697" description="IAA-alanine resistance protein 1">
    <location>
        <begin position="29"/>
        <end position="469"/>
    </location>
</feature>
<feature type="transmembrane region" description="Helical" evidence="1">
    <location>
        <begin position="114"/>
        <end position="134"/>
    </location>
</feature>
<feature type="transmembrane region" description="Helical" evidence="1">
    <location>
        <begin position="141"/>
        <end position="161"/>
    </location>
</feature>
<feature type="transmembrane region" description="Helical" evidence="1">
    <location>
        <begin position="201"/>
        <end position="221"/>
    </location>
</feature>
<feature type="transmembrane region" description="Helical" evidence="1">
    <location>
        <begin position="387"/>
        <end position="407"/>
    </location>
</feature>
<feature type="transmembrane region" description="Helical" evidence="1">
    <location>
        <begin position="415"/>
        <end position="435"/>
    </location>
</feature>
<feature type="transmembrane region" description="Helical" evidence="1">
    <location>
        <begin position="448"/>
        <end position="468"/>
    </location>
</feature>
<feature type="region of interest" description="Disordered" evidence="2">
    <location>
        <begin position="33"/>
        <end position="58"/>
    </location>
</feature>
<feature type="region of interest" description="Disordered" evidence="2">
    <location>
        <begin position="170"/>
        <end position="197"/>
    </location>
</feature>
<feature type="region of interest" description="Disordered" evidence="2">
    <location>
        <begin position="228"/>
        <end position="315"/>
    </location>
</feature>
<feature type="compositionally biased region" description="Basic and acidic residues" evidence="2">
    <location>
        <begin position="47"/>
        <end position="58"/>
    </location>
</feature>
<feature type="compositionally biased region" description="Basic and acidic residues" evidence="2">
    <location>
        <begin position="173"/>
        <end position="193"/>
    </location>
</feature>
<feature type="compositionally biased region" description="Basic residues" evidence="2">
    <location>
        <begin position="235"/>
        <end position="246"/>
    </location>
</feature>
<feature type="compositionally biased region" description="Basic and acidic residues" evidence="2">
    <location>
        <begin position="247"/>
        <end position="256"/>
    </location>
</feature>
<feature type="compositionally biased region" description="Polar residues" evidence="2">
    <location>
        <begin position="257"/>
        <end position="279"/>
    </location>
</feature>
<feature type="compositionally biased region" description="Basic and acidic residues" evidence="2">
    <location>
        <begin position="292"/>
        <end position="315"/>
    </location>
</feature>
<accession>Q9M647</accession>
<accession>Q8H9F6</accession>
<accession>Q8VYF8</accession>
<accession>Q9C9X4</accession>
<dbReference type="EMBL" id="AF216524">
    <property type="protein sequence ID" value="AAF32299.1"/>
    <property type="molecule type" value="mRNA"/>
</dbReference>
<dbReference type="EMBL" id="AC012563">
    <property type="protein sequence ID" value="AAG52008.1"/>
    <property type="status" value="ALT_SEQ"/>
    <property type="molecule type" value="Genomic_DNA"/>
</dbReference>
<dbReference type="EMBL" id="CP002684">
    <property type="protein sequence ID" value="AEE34749.1"/>
    <property type="molecule type" value="Genomic_DNA"/>
</dbReference>
<dbReference type="EMBL" id="AY072108">
    <property type="protein sequence ID" value="AAL59930.1"/>
    <property type="status" value="ALT_FRAME"/>
    <property type="molecule type" value="mRNA"/>
</dbReference>
<dbReference type="EMBL" id="BT001920">
    <property type="protein sequence ID" value="AAN71919.1"/>
    <property type="molecule type" value="mRNA"/>
</dbReference>
<dbReference type="EMBL" id="AK229148">
    <property type="protein sequence ID" value="BAF01022.1"/>
    <property type="molecule type" value="mRNA"/>
</dbReference>
<dbReference type="EMBL" id="AY084533">
    <property type="protein sequence ID" value="AAM61101.1"/>
    <property type="molecule type" value="mRNA"/>
</dbReference>
<dbReference type="RefSeq" id="NP_564921.1">
    <property type="nucleotide sequence ID" value="NM_105480.3"/>
</dbReference>
<dbReference type="BioGRID" id="28359">
    <property type="interactions" value="1"/>
</dbReference>
<dbReference type="FunCoup" id="Q9M647">
    <property type="interactions" value="2932"/>
</dbReference>
<dbReference type="STRING" id="3702.Q9M647"/>
<dbReference type="TCDB" id="2.A.5.4.7">
    <property type="family name" value="the zinc (zn(2+))-iron (fe(2+)) permease (zip) family"/>
</dbReference>
<dbReference type="iPTMnet" id="Q9M647"/>
<dbReference type="PaxDb" id="3702-AT1G68100.1"/>
<dbReference type="ProteomicsDB" id="248565"/>
<dbReference type="EnsemblPlants" id="AT1G68100.1">
    <property type="protein sequence ID" value="AT1G68100.1"/>
    <property type="gene ID" value="AT1G68100"/>
</dbReference>
<dbReference type="GeneID" id="843138"/>
<dbReference type="Gramene" id="AT1G68100.1">
    <property type="protein sequence ID" value="AT1G68100.1"/>
    <property type="gene ID" value="AT1G68100"/>
</dbReference>
<dbReference type="KEGG" id="ath:AT1G68100"/>
<dbReference type="Araport" id="AT1G68100"/>
<dbReference type="TAIR" id="AT1G68100">
    <property type="gene designation" value="IAR1"/>
</dbReference>
<dbReference type="eggNOG" id="KOG2693">
    <property type="taxonomic scope" value="Eukaryota"/>
</dbReference>
<dbReference type="HOGENOM" id="CLU_015114_0_1_1"/>
<dbReference type="InParanoid" id="Q9M647"/>
<dbReference type="OMA" id="IWLHSIG"/>
<dbReference type="PhylomeDB" id="Q9M647"/>
<dbReference type="PRO" id="PR:Q9M647"/>
<dbReference type="Proteomes" id="UP000006548">
    <property type="component" value="Chromosome 1"/>
</dbReference>
<dbReference type="ExpressionAtlas" id="Q9M647">
    <property type="expression patterns" value="baseline and differential"/>
</dbReference>
<dbReference type="GO" id="GO:0005783">
    <property type="term" value="C:endoplasmic reticulum"/>
    <property type="evidence" value="ECO:0007005"/>
    <property type="project" value="TAIR"/>
</dbReference>
<dbReference type="GO" id="GO:0016020">
    <property type="term" value="C:membrane"/>
    <property type="evidence" value="ECO:0007669"/>
    <property type="project" value="UniProtKB-SubCell"/>
</dbReference>
<dbReference type="GO" id="GO:0046873">
    <property type="term" value="F:metal ion transmembrane transporter activity"/>
    <property type="evidence" value="ECO:0007669"/>
    <property type="project" value="InterPro"/>
</dbReference>
<dbReference type="InterPro" id="IPR003689">
    <property type="entry name" value="ZIP"/>
</dbReference>
<dbReference type="PANTHER" id="PTHR16950">
    <property type="entry name" value="ZINC TRANSPORTER SLC39A7 HISTIDINE-RICH MEMBRANE PROTEIN KE4"/>
    <property type="match status" value="1"/>
</dbReference>
<dbReference type="PANTHER" id="PTHR16950:SF16">
    <property type="entry name" value="ZINC TRANSPORTER ZIP13"/>
    <property type="match status" value="1"/>
</dbReference>
<dbReference type="Pfam" id="PF02535">
    <property type="entry name" value="Zip"/>
    <property type="match status" value="1"/>
</dbReference>
<protein>
    <recommendedName>
        <fullName>IAA-alanine resistance protein 1</fullName>
    </recommendedName>
</protein>
<reference key="1">
    <citation type="journal article" date="2000" name="Plant Cell">
        <title>Cloning and characterization of IAR1, a gene required for auxin conjugate sensitivity in Arabidopsis.</title>
        <authorList>
            <person name="Lasswell J.E."/>
            <person name="Rogg L.E."/>
            <person name="Nelson D.C."/>
            <person name="Rongey C."/>
            <person name="Bartel B."/>
        </authorList>
    </citation>
    <scope>NUCLEOTIDE SEQUENCE [MRNA]</scope>
    <source>
        <strain>cv. Landsberg erecta</strain>
    </source>
</reference>
<reference key="2">
    <citation type="journal article" date="2000" name="Nature">
        <title>Sequence and analysis of chromosome 1 of the plant Arabidopsis thaliana.</title>
        <authorList>
            <person name="Theologis A."/>
            <person name="Ecker J.R."/>
            <person name="Palm C.J."/>
            <person name="Federspiel N.A."/>
            <person name="Kaul S."/>
            <person name="White O."/>
            <person name="Alonso J."/>
            <person name="Altafi H."/>
            <person name="Araujo R."/>
            <person name="Bowman C.L."/>
            <person name="Brooks S.Y."/>
            <person name="Buehler E."/>
            <person name="Chan A."/>
            <person name="Chao Q."/>
            <person name="Chen H."/>
            <person name="Cheuk R.F."/>
            <person name="Chin C.W."/>
            <person name="Chung M.K."/>
            <person name="Conn L."/>
            <person name="Conway A.B."/>
            <person name="Conway A.R."/>
            <person name="Creasy T.H."/>
            <person name="Dewar K."/>
            <person name="Dunn P."/>
            <person name="Etgu P."/>
            <person name="Feldblyum T.V."/>
            <person name="Feng J.-D."/>
            <person name="Fong B."/>
            <person name="Fujii C.Y."/>
            <person name="Gill J.E."/>
            <person name="Goldsmith A.D."/>
            <person name="Haas B."/>
            <person name="Hansen N.F."/>
            <person name="Hughes B."/>
            <person name="Huizar L."/>
            <person name="Hunter J.L."/>
            <person name="Jenkins J."/>
            <person name="Johnson-Hopson C."/>
            <person name="Khan S."/>
            <person name="Khaykin E."/>
            <person name="Kim C.J."/>
            <person name="Koo H.L."/>
            <person name="Kremenetskaia I."/>
            <person name="Kurtz D.B."/>
            <person name="Kwan A."/>
            <person name="Lam B."/>
            <person name="Langin-Hooper S."/>
            <person name="Lee A."/>
            <person name="Lee J.M."/>
            <person name="Lenz C.A."/>
            <person name="Li J.H."/>
            <person name="Li Y.-P."/>
            <person name="Lin X."/>
            <person name="Liu S.X."/>
            <person name="Liu Z.A."/>
            <person name="Luros J.S."/>
            <person name="Maiti R."/>
            <person name="Marziali A."/>
            <person name="Militscher J."/>
            <person name="Miranda M."/>
            <person name="Nguyen M."/>
            <person name="Nierman W.C."/>
            <person name="Osborne B.I."/>
            <person name="Pai G."/>
            <person name="Peterson J."/>
            <person name="Pham P.K."/>
            <person name="Rizzo M."/>
            <person name="Rooney T."/>
            <person name="Rowley D."/>
            <person name="Sakano H."/>
            <person name="Salzberg S.L."/>
            <person name="Schwartz J.R."/>
            <person name="Shinn P."/>
            <person name="Southwick A.M."/>
            <person name="Sun H."/>
            <person name="Tallon L.J."/>
            <person name="Tambunga G."/>
            <person name="Toriumi M.J."/>
            <person name="Town C.D."/>
            <person name="Utterback T."/>
            <person name="Van Aken S."/>
            <person name="Vaysberg M."/>
            <person name="Vysotskaia V.S."/>
            <person name="Walker M."/>
            <person name="Wu D."/>
            <person name="Yu G."/>
            <person name="Fraser C.M."/>
            <person name="Venter J.C."/>
            <person name="Davis R.W."/>
        </authorList>
    </citation>
    <scope>NUCLEOTIDE SEQUENCE [LARGE SCALE GENOMIC DNA]</scope>
    <source>
        <strain>cv. Columbia</strain>
    </source>
</reference>
<reference key="3">
    <citation type="journal article" date="2017" name="Plant J.">
        <title>Araport11: a complete reannotation of the Arabidopsis thaliana reference genome.</title>
        <authorList>
            <person name="Cheng C.Y."/>
            <person name="Krishnakumar V."/>
            <person name="Chan A.P."/>
            <person name="Thibaud-Nissen F."/>
            <person name="Schobel S."/>
            <person name="Town C.D."/>
        </authorList>
    </citation>
    <scope>GENOME REANNOTATION</scope>
    <source>
        <strain>cv. Columbia</strain>
    </source>
</reference>
<reference key="4">
    <citation type="journal article" date="2003" name="Science">
        <title>Empirical analysis of transcriptional activity in the Arabidopsis genome.</title>
        <authorList>
            <person name="Yamada K."/>
            <person name="Lim J."/>
            <person name="Dale J.M."/>
            <person name="Chen H."/>
            <person name="Shinn P."/>
            <person name="Palm C.J."/>
            <person name="Southwick A.M."/>
            <person name="Wu H.C."/>
            <person name="Kim C.J."/>
            <person name="Nguyen M."/>
            <person name="Pham P.K."/>
            <person name="Cheuk R.F."/>
            <person name="Karlin-Newmann G."/>
            <person name="Liu S.X."/>
            <person name="Lam B."/>
            <person name="Sakano H."/>
            <person name="Wu T."/>
            <person name="Yu G."/>
            <person name="Miranda M."/>
            <person name="Quach H.L."/>
            <person name="Tripp M."/>
            <person name="Chang C.H."/>
            <person name="Lee J.M."/>
            <person name="Toriumi M.J."/>
            <person name="Chan M.M."/>
            <person name="Tang C.C."/>
            <person name="Onodera C.S."/>
            <person name="Deng J.M."/>
            <person name="Akiyama K."/>
            <person name="Ansari Y."/>
            <person name="Arakawa T."/>
            <person name="Banh J."/>
            <person name="Banno F."/>
            <person name="Bowser L."/>
            <person name="Brooks S.Y."/>
            <person name="Carninci P."/>
            <person name="Chao Q."/>
            <person name="Choy N."/>
            <person name="Enju A."/>
            <person name="Goldsmith A.D."/>
            <person name="Gurjal M."/>
            <person name="Hansen N.F."/>
            <person name="Hayashizaki Y."/>
            <person name="Johnson-Hopson C."/>
            <person name="Hsuan V.W."/>
            <person name="Iida K."/>
            <person name="Karnes M."/>
            <person name="Khan S."/>
            <person name="Koesema E."/>
            <person name="Ishida J."/>
            <person name="Jiang P.X."/>
            <person name="Jones T."/>
            <person name="Kawai J."/>
            <person name="Kamiya A."/>
            <person name="Meyers C."/>
            <person name="Nakajima M."/>
            <person name="Narusaka M."/>
            <person name="Seki M."/>
            <person name="Sakurai T."/>
            <person name="Satou M."/>
            <person name="Tamse R."/>
            <person name="Vaysberg M."/>
            <person name="Wallender E.K."/>
            <person name="Wong C."/>
            <person name="Yamamura Y."/>
            <person name="Yuan S."/>
            <person name="Shinozaki K."/>
            <person name="Davis R.W."/>
            <person name="Theologis A."/>
            <person name="Ecker J.R."/>
        </authorList>
    </citation>
    <scope>NUCLEOTIDE SEQUENCE [LARGE SCALE MRNA]</scope>
    <source>
        <strain>cv. Columbia</strain>
    </source>
</reference>
<reference key="5">
    <citation type="submission" date="2006-07" db="EMBL/GenBank/DDBJ databases">
        <title>Large-scale analysis of RIKEN Arabidopsis full-length (RAFL) cDNAs.</title>
        <authorList>
            <person name="Totoki Y."/>
            <person name="Seki M."/>
            <person name="Ishida J."/>
            <person name="Nakajima M."/>
            <person name="Enju A."/>
            <person name="Kamiya A."/>
            <person name="Narusaka M."/>
            <person name="Shin-i T."/>
            <person name="Nakagawa M."/>
            <person name="Sakamoto N."/>
            <person name="Oishi K."/>
            <person name="Kohara Y."/>
            <person name="Kobayashi M."/>
            <person name="Toyoda A."/>
            <person name="Sakaki Y."/>
            <person name="Sakurai T."/>
            <person name="Iida K."/>
            <person name="Akiyama K."/>
            <person name="Satou M."/>
            <person name="Toyoda T."/>
            <person name="Konagaya A."/>
            <person name="Carninci P."/>
            <person name="Kawai J."/>
            <person name="Hayashizaki Y."/>
            <person name="Shinozaki K."/>
        </authorList>
    </citation>
    <scope>NUCLEOTIDE SEQUENCE [LARGE SCALE MRNA]</scope>
    <source>
        <strain>cv. Columbia</strain>
    </source>
</reference>
<reference key="6">
    <citation type="submission" date="2002-03" db="EMBL/GenBank/DDBJ databases">
        <title>Full-length cDNA from Arabidopsis thaliana.</title>
        <authorList>
            <person name="Brover V.V."/>
            <person name="Troukhan M.E."/>
            <person name="Alexandrov N.A."/>
            <person name="Lu Y.-P."/>
            <person name="Flavell R.B."/>
            <person name="Feldmann K.A."/>
        </authorList>
    </citation>
    <scope>NUCLEOTIDE SEQUENCE [LARGE SCALE MRNA]</scope>
</reference>
<name>IAR1_ARATH</name>
<sequence length="469" mass="50583">MSFSLRKLLVPILVLVLFLDLCVESGFSQSTPARDDHVHHHGGGCSHSHDHDHDHDHDHHVKKTTAKVEMKLPEELAEEEDMRLCGFGPCLHDHDHESSSTLTGFALWLNALGCSLLVSLASLICLVLLPIMFVQGKPSKWFVDSLALFGAGAMLGDAFLHQLPHAFGGGHSHSNDHHENHDHHDHSHSDSPSHSHSIQDLSVGLSVLAGIVVFLLVEKLVRYVEENSSGSNTWGHHHHHHHAGSKKLKDEGDHNNLDQQSSSDAIVNSSEKVSGGSTDKSLRKRKTSASDATDKSDSGTEITSDGKSDKPEQVETRSSSLVFGYLNLFSDGVHNFTDGMALGSAFLIYGSVGGWSRTMFLLAHELPQEIGDFGILVRSGFTVTKALFFNFLSALVALAGTALVLVWGNEPGQSSLIEGFTAGGFIYIAVAGVLAEMNNSGKSTLKNSACHLISLILGMSVALCISLIE</sequence>
<proteinExistence type="evidence at transcript level"/>
<keyword id="KW-0472">Membrane</keyword>
<keyword id="KW-1185">Reference proteome</keyword>
<keyword id="KW-0732">Signal</keyword>
<keyword id="KW-0812">Transmembrane</keyword>
<keyword id="KW-1133">Transmembrane helix</keyword>
<keyword id="KW-0813">Transport</keyword>
<gene>
    <name type="primary">IAR1</name>
    <name type="ordered locus">At1g68100</name>
    <name type="ORF">T23K23.5</name>
</gene>
<comment type="function">
    <text>May participate in auxin metabolism or response. Probable transporter.</text>
</comment>
<comment type="subcellular location">
    <subcellularLocation>
        <location evidence="3">Membrane</location>
        <topology evidence="3">Multi-pass membrane protein</topology>
    </subcellularLocation>
</comment>
<comment type="similarity">
    <text evidence="3">Belongs to the ZIP transporter (TC 2.A.5) family. KE4/Catsup subfamily.</text>
</comment>
<comment type="sequence caution" evidence="3">
    <conflict type="erroneous gene model prediction">
        <sequence resource="EMBL-CDS" id="AAG52008"/>
    </conflict>
</comment>
<comment type="sequence caution" evidence="3">
    <conflict type="frameshift">
        <sequence resource="EMBL-CDS" id="AAL59930"/>
    </conflict>
</comment>
<evidence type="ECO:0000255" key="1"/>
<evidence type="ECO:0000256" key="2">
    <source>
        <dbReference type="SAM" id="MobiDB-lite"/>
    </source>
</evidence>
<evidence type="ECO:0000305" key="3"/>
<organism>
    <name type="scientific">Arabidopsis thaliana</name>
    <name type="common">Mouse-ear cress</name>
    <dbReference type="NCBI Taxonomy" id="3702"/>
    <lineage>
        <taxon>Eukaryota</taxon>
        <taxon>Viridiplantae</taxon>
        <taxon>Streptophyta</taxon>
        <taxon>Embryophyta</taxon>
        <taxon>Tracheophyta</taxon>
        <taxon>Spermatophyta</taxon>
        <taxon>Magnoliopsida</taxon>
        <taxon>eudicotyledons</taxon>
        <taxon>Gunneridae</taxon>
        <taxon>Pentapetalae</taxon>
        <taxon>rosids</taxon>
        <taxon>malvids</taxon>
        <taxon>Brassicales</taxon>
        <taxon>Brassicaceae</taxon>
        <taxon>Camelineae</taxon>
        <taxon>Arabidopsis</taxon>
    </lineage>
</organism>